<sequence>MSEIKDVIVQGLWKNNSALVQLLGLCPLLAVTSTATNALGLGLATTLVLTLTNLTISTLRHWTPSEIRIPIYVMIIASVVSAVQMLINAYAFGLYQSLGIFIPLIVTNCIVVGRAEAFAAKKGPALSALDGFSIGMGATCAMFVLGSLREIIGNGTLFDGADALLGSWAKVLRVEIFHTDSPFLLAMLPPGAFIGLGLMLAGKYLIDEKMKKRRTEAAAERALPNGETGNV</sequence>
<keyword id="KW-0997">Cell inner membrane</keyword>
<keyword id="KW-1003">Cell membrane</keyword>
<keyword id="KW-0249">Electron transport</keyword>
<keyword id="KW-0472">Membrane</keyword>
<keyword id="KW-1278">Translocase</keyword>
<keyword id="KW-0812">Transmembrane</keyword>
<keyword id="KW-1133">Transmembrane helix</keyword>
<keyword id="KW-0813">Transport</keyword>
<evidence type="ECO:0000255" key="1">
    <source>
        <dbReference type="HAMAP-Rule" id="MF_00478"/>
    </source>
</evidence>
<name>RSXE_ECOL5</name>
<protein>
    <recommendedName>
        <fullName evidence="1">Ion-translocating oxidoreductase complex subunit E</fullName>
        <ecNumber evidence="1">7.-.-.-</ecNumber>
    </recommendedName>
    <alternativeName>
        <fullName evidence="1">Rsx electron transport complex subunit E</fullName>
    </alternativeName>
</protein>
<organism>
    <name type="scientific">Escherichia coli O6:K15:H31 (strain 536 / UPEC)</name>
    <dbReference type="NCBI Taxonomy" id="362663"/>
    <lineage>
        <taxon>Bacteria</taxon>
        <taxon>Pseudomonadati</taxon>
        <taxon>Pseudomonadota</taxon>
        <taxon>Gammaproteobacteria</taxon>
        <taxon>Enterobacterales</taxon>
        <taxon>Enterobacteriaceae</taxon>
        <taxon>Escherichia</taxon>
    </lineage>
</organism>
<feature type="chain" id="PRO_1000014088" description="Ion-translocating oxidoreductase complex subunit E">
    <location>
        <begin position="1"/>
        <end position="231"/>
    </location>
</feature>
<feature type="transmembrane region" description="Helical" evidence="1">
    <location>
        <begin position="18"/>
        <end position="38"/>
    </location>
</feature>
<feature type="transmembrane region" description="Helical" evidence="1">
    <location>
        <begin position="39"/>
        <end position="59"/>
    </location>
</feature>
<feature type="transmembrane region" description="Helical" evidence="1">
    <location>
        <begin position="63"/>
        <end position="83"/>
    </location>
</feature>
<feature type="transmembrane region" description="Helical" evidence="1">
    <location>
        <begin position="86"/>
        <end position="106"/>
    </location>
</feature>
<feature type="transmembrane region" description="Helical" evidence="1">
    <location>
        <begin position="125"/>
        <end position="145"/>
    </location>
</feature>
<feature type="transmembrane region" description="Helical" evidence="1">
    <location>
        <begin position="182"/>
        <end position="202"/>
    </location>
</feature>
<accession>Q0THJ5</accession>
<gene>
    <name evidence="1" type="primary">rsxE</name>
    <name type="ordered locus">ECP_1577</name>
</gene>
<comment type="function">
    <text evidence="1">Part of a membrane-bound complex that couples electron transfer with translocation of ions across the membrane. Required to maintain the reduced state of SoxR.</text>
</comment>
<comment type="subunit">
    <text evidence="1">The complex is composed of six subunits: RsxA, RsxB, RsxC, RsxD, RsxE and RsxG.</text>
</comment>
<comment type="subcellular location">
    <subcellularLocation>
        <location evidence="1">Cell inner membrane</location>
        <topology evidence="1">Multi-pass membrane protein</topology>
    </subcellularLocation>
</comment>
<comment type="similarity">
    <text evidence="1">Belongs to the NqrDE/RnfAE family.</text>
</comment>
<dbReference type="EC" id="7.-.-.-" evidence="1"/>
<dbReference type="EMBL" id="CP000247">
    <property type="protein sequence ID" value="ABG69584.1"/>
    <property type="molecule type" value="Genomic_DNA"/>
</dbReference>
<dbReference type="RefSeq" id="WP_001289668.1">
    <property type="nucleotide sequence ID" value="NC_008253.1"/>
</dbReference>
<dbReference type="SMR" id="Q0THJ5"/>
<dbReference type="KEGG" id="ecp:ECP_1577"/>
<dbReference type="HOGENOM" id="CLU_046659_1_0_6"/>
<dbReference type="Proteomes" id="UP000009182">
    <property type="component" value="Chromosome"/>
</dbReference>
<dbReference type="GO" id="GO:0005886">
    <property type="term" value="C:plasma membrane"/>
    <property type="evidence" value="ECO:0007669"/>
    <property type="project" value="UniProtKB-SubCell"/>
</dbReference>
<dbReference type="GO" id="GO:0022900">
    <property type="term" value="P:electron transport chain"/>
    <property type="evidence" value="ECO:0007669"/>
    <property type="project" value="UniProtKB-UniRule"/>
</dbReference>
<dbReference type="HAMAP" id="MF_00478">
    <property type="entry name" value="RsxE_RnfE"/>
    <property type="match status" value="1"/>
</dbReference>
<dbReference type="InterPro" id="IPR003667">
    <property type="entry name" value="NqrDE/RnfAE"/>
</dbReference>
<dbReference type="InterPro" id="IPR010968">
    <property type="entry name" value="RnfE"/>
</dbReference>
<dbReference type="NCBIfam" id="NF009070">
    <property type="entry name" value="PRK12405.1"/>
    <property type="match status" value="1"/>
</dbReference>
<dbReference type="NCBIfam" id="TIGR01948">
    <property type="entry name" value="rnfE"/>
    <property type="match status" value="1"/>
</dbReference>
<dbReference type="PANTHER" id="PTHR30586">
    <property type="entry name" value="ELECTRON TRANSPORT COMPLEX PROTEIN RNFE"/>
    <property type="match status" value="1"/>
</dbReference>
<dbReference type="PANTHER" id="PTHR30586:SF0">
    <property type="entry name" value="ION-TRANSLOCATING OXIDOREDUCTASE COMPLEX SUBUNIT E"/>
    <property type="match status" value="1"/>
</dbReference>
<dbReference type="Pfam" id="PF02508">
    <property type="entry name" value="Rnf-Nqr"/>
    <property type="match status" value="1"/>
</dbReference>
<dbReference type="PIRSF" id="PIRSF006102">
    <property type="entry name" value="NQR_DE"/>
    <property type="match status" value="1"/>
</dbReference>
<reference key="1">
    <citation type="journal article" date="2006" name="Mol. Microbiol.">
        <title>Role of pathogenicity island-associated integrases in the genome plasticity of uropathogenic Escherichia coli strain 536.</title>
        <authorList>
            <person name="Hochhut B."/>
            <person name="Wilde C."/>
            <person name="Balling G."/>
            <person name="Middendorf B."/>
            <person name="Dobrindt U."/>
            <person name="Brzuszkiewicz E."/>
            <person name="Gottschalk G."/>
            <person name="Carniel E."/>
            <person name="Hacker J."/>
        </authorList>
    </citation>
    <scope>NUCLEOTIDE SEQUENCE [LARGE SCALE GENOMIC DNA]</scope>
    <source>
        <strain>536 / UPEC</strain>
    </source>
</reference>
<proteinExistence type="inferred from homology"/>